<proteinExistence type="inferred from homology"/>
<evidence type="ECO:0000255" key="1">
    <source>
        <dbReference type="HAMAP-Rule" id="MF_00237"/>
    </source>
</evidence>
<evidence type="ECO:0000256" key="2">
    <source>
        <dbReference type="SAM" id="MobiDB-lite"/>
    </source>
</evidence>
<name>TATB_SHESA</name>
<accession>A0L1M8</accession>
<sequence>MFDGIGFMELLLIGVLGLVVLGPERLPVAVRSVTSWIRAMKRMANSVKEELEQELKIEQLHADLKKAESKGLSNLSPELQESIDQLKQAAQSVNRPYQVQDVPAPENQIHNPASQSVSTEASPSASSAPTSESNQGEDTRSNPKANG</sequence>
<gene>
    <name evidence="1" type="primary">tatB</name>
    <name type="ordered locus">Shewana3_3729</name>
</gene>
<protein>
    <recommendedName>
        <fullName evidence="1">Sec-independent protein translocase protein TatB</fullName>
    </recommendedName>
</protein>
<organism>
    <name type="scientific">Shewanella sp. (strain ANA-3)</name>
    <dbReference type="NCBI Taxonomy" id="94122"/>
    <lineage>
        <taxon>Bacteria</taxon>
        <taxon>Pseudomonadati</taxon>
        <taxon>Pseudomonadota</taxon>
        <taxon>Gammaproteobacteria</taxon>
        <taxon>Alteromonadales</taxon>
        <taxon>Shewanellaceae</taxon>
        <taxon>Shewanella</taxon>
    </lineage>
</organism>
<reference key="1">
    <citation type="submission" date="2006-09" db="EMBL/GenBank/DDBJ databases">
        <title>Complete sequence of chromosome 1 of Shewanella sp. ANA-3.</title>
        <authorList>
            <person name="Copeland A."/>
            <person name="Lucas S."/>
            <person name="Lapidus A."/>
            <person name="Barry K."/>
            <person name="Detter J.C."/>
            <person name="Glavina del Rio T."/>
            <person name="Hammon N."/>
            <person name="Israni S."/>
            <person name="Dalin E."/>
            <person name="Tice H."/>
            <person name="Pitluck S."/>
            <person name="Chertkov O."/>
            <person name="Brettin T."/>
            <person name="Bruce D."/>
            <person name="Han C."/>
            <person name="Tapia R."/>
            <person name="Gilna P."/>
            <person name="Schmutz J."/>
            <person name="Larimer F."/>
            <person name="Land M."/>
            <person name="Hauser L."/>
            <person name="Kyrpides N."/>
            <person name="Kim E."/>
            <person name="Newman D."/>
            <person name="Salticov C."/>
            <person name="Konstantinidis K."/>
            <person name="Klappenback J."/>
            <person name="Tiedje J."/>
            <person name="Richardson P."/>
        </authorList>
    </citation>
    <scope>NUCLEOTIDE SEQUENCE [LARGE SCALE GENOMIC DNA]</scope>
    <source>
        <strain>ANA-3</strain>
    </source>
</reference>
<comment type="function">
    <text evidence="1">Part of the twin-arginine translocation (Tat) system that transports large folded proteins containing a characteristic twin-arginine motif in their signal peptide across membranes. Together with TatC, TatB is part of a receptor directly interacting with Tat signal peptides. TatB may form an oligomeric binding site that transiently accommodates folded Tat precursor proteins before their translocation.</text>
</comment>
<comment type="subunit">
    <text evidence="1">The Tat system comprises two distinct complexes: a TatABC complex, containing multiple copies of TatA, TatB and TatC subunits, and a separate TatA complex, containing only TatA subunits. Substrates initially bind to the TatABC complex, which probably triggers association of the separate TatA complex to form the active translocon.</text>
</comment>
<comment type="subcellular location">
    <subcellularLocation>
        <location evidence="1">Cell inner membrane</location>
        <topology evidence="1">Single-pass membrane protein</topology>
    </subcellularLocation>
</comment>
<comment type="similarity">
    <text evidence="1">Belongs to the TatB family.</text>
</comment>
<feature type="chain" id="PRO_0000301236" description="Sec-independent protein translocase protein TatB">
    <location>
        <begin position="1"/>
        <end position="147"/>
    </location>
</feature>
<feature type="transmembrane region" description="Helical" evidence="1">
    <location>
        <begin position="2"/>
        <end position="22"/>
    </location>
</feature>
<feature type="region of interest" description="Disordered" evidence="2">
    <location>
        <begin position="85"/>
        <end position="147"/>
    </location>
</feature>
<feature type="compositionally biased region" description="Polar residues" evidence="2">
    <location>
        <begin position="85"/>
        <end position="97"/>
    </location>
</feature>
<feature type="compositionally biased region" description="Low complexity" evidence="2">
    <location>
        <begin position="113"/>
        <end position="133"/>
    </location>
</feature>
<dbReference type="EMBL" id="CP000469">
    <property type="protein sequence ID" value="ABK49947.1"/>
    <property type="molecule type" value="Genomic_DNA"/>
</dbReference>
<dbReference type="RefSeq" id="WP_011718486.1">
    <property type="nucleotide sequence ID" value="NC_008577.1"/>
</dbReference>
<dbReference type="SMR" id="A0L1M8"/>
<dbReference type="STRING" id="94122.Shewana3_3729"/>
<dbReference type="KEGG" id="shn:Shewana3_3729"/>
<dbReference type="eggNOG" id="COG1826">
    <property type="taxonomic scope" value="Bacteria"/>
</dbReference>
<dbReference type="HOGENOM" id="CLU_086034_1_0_6"/>
<dbReference type="OrthoDB" id="9816005at2"/>
<dbReference type="Proteomes" id="UP000002589">
    <property type="component" value="Chromosome"/>
</dbReference>
<dbReference type="GO" id="GO:0033281">
    <property type="term" value="C:TAT protein transport complex"/>
    <property type="evidence" value="ECO:0007669"/>
    <property type="project" value="UniProtKB-UniRule"/>
</dbReference>
<dbReference type="GO" id="GO:0008320">
    <property type="term" value="F:protein transmembrane transporter activity"/>
    <property type="evidence" value="ECO:0007669"/>
    <property type="project" value="UniProtKB-UniRule"/>
</dbReference>
<dbReference type="GO" id="GO:0043953">
    <property type="term" value="P:protein transport by the Tat complex"/>
    <property type="evidence" value="ECO:0007669"/>
    <property type="project" value="UniProtKB-UniRule"/>
</dbReference>
<dbReference type="Gene3D" id="1.20.5.3310">
    <property type="match status" value="1"/>
</dbReference>
<dbReference type="HAMAP" id="MF_00237">
    <property type="entry name" value="TatB"/>
    <property type="match status" value="1"/>
</dbReference>
<dbReference type="InterPro" id="IPR003369">
    <property type="entry name" value="TatA/B/E"/>
</dbReference>
<dbReference type="InterPro" id="IPR018448">
    <property type="entry name" value="TatB"/>
</dbReference>
<dbReference type="NCBIfam" id="TIGR01410">
    <property type="entry name" value="tatB"/>
    <property type="match status" value="1"/>
</dbReference>
<dbReference type="PANTHER" id="PTHR33162">
    <property type="entry name" value="SEC-INDEPENDENT PROTEIN TRANSLOCASE PROTEIN TATA, CHLOROPLASTIC"/>
    <property type="match status" value="1"/>
</dbReference>
<dbReference type="PANTHER" id="PTHR33162:SF1">
    <property type="entry name" value="SEC-INDEPENDENT PROTEIN TRANSLOCASE PROTEIN TATA, CHLOROPLASTIC"/>
    <property type="match status" value="1"/>
</dbReference>
<dbReference type="Pfam" id="PF02416">
    <property type="entry name" value="TatA_B_E"/>
    <property type="match status" value="1"/>
</dbReference>
<dbReference type="PRINTS" id="PR01506">
    <property type="entry name" value="TATBPROTEIN"/>
</dbReference>
<keyword id="KW-0997">Cell inner membrane</keyword>
<keyword id="KW-1003">Cell membrane</keyword>
<keyword id="KW-0472">Membrane</keyword>
<keyword id="KW-0653">Protein transport</keyword>
<keyword id="KW-0811">Translocation</keyword>
<keyword id="KW-0812">Transmembrane</keyword>
<keyword id="KW-1133">Transmembrane helix</keyword>
<keyword id="KW-0813">Transport</keyword>